<name>LPT_YERPP</name>
<reference key="1">
    <citation type="submission" date="2007-02" db="EMBL/GenBank/DDBJ databases">
        <title>Complete sequence of chromosome of Yersinia pestis Pestoides F.</title>
        <authorList>
            <consortium name="US DOE Joint Genome Institute"/>
            <person name="Copeland A."/>
            <person name="Lucas S."/>
            <person name="Lapidus A."/>
            <person name="Barry K."/>
            <person name="Detter J.C."/>
            <person name="Glavina del Rio T."/>
            <person name="Hammon N."/>
            <person name="Israni S."/>
            <person name="Dalin E."/>
            <person name="Tice H."/>
            <person name="Pitluck S."/>
            <person name="Di Bartolo G."/>
            <person name="Chain P."/>
            <person name="Malfatti S."/>
            <person name="Shin M."/>
            <person name="Vergez L."/>
            <person name="Schmutz J."/>
            <person name="Larimer F."/>
            <person name="Land M."/>
            <person name="Hauser L."/>
            <person name="Worsham P."/>
            <person name="Chu M."/>
            <person name="Bearden S."/>
            <person name="Garcia E."/>
            <person name="Richardson P."/>
        </authorList>
    </citation>
    <scope>NUCLEOTIDE SEQUENCE [LARGE SCALE GENOMIC DNA]</scope>
    <source>
        <strain>Pestoides F</strain>
    </source>
</reference>
<protein>
    <recommendedName>
        <fullName evidence="1">thr operon leader peptide</fullName>
    </recommendedName>
    <alternativeName>
        <fullName evidence="1">thr operon attenuator</fullName>
    </alternativeName>
</protein>
<dbReference type="EMBL" id="CP000668">
    <property type="status" value="NOT_ANNOTATED_CDS"/>
    <property type="molecule type" value="Genomic_DNA"/>
</dbReference>
<dbReference type="RefSeq" id="WP_002231504.1">
    <property type="nucleotide sequence ID" value="NZ_CP009715.1"/>
</dbReference>
<dbReference type="GeneID" id="96666390"/>
<dbReference type="GO" id="GO:0009088">
    <property type="term" value="P:threonine biosynthetic process"/>
    <property type="evidence" value="ECO:0007669"/>
    <property type="project" value="UniProtKB-UniRule"/>
</dbReference>
<dbReference type="GO" id="GO:0031556">
    <property type="term" value="P:transcriptional attenuation by ribosome"/>
    <property type="evidence" value="ECO:0007669"/>
    <property type="project" value="UniProtKB-UniRule"/>
</dbReference>
<dbReference type="HAMAP" id="MF_01907">
    <property type="entry name" value="Leader_Thr"/>
    <property type="match status" value="1"/>
</dbReference>
<dbReference type="InterPro" id="IPR011720">
    <property type="entry name" value="Thr_lead_pept"/>
</dbReference>
<dbReference type="NCBIfam" id="TIGR02077">
    <property type="entry name" value="thr_lead_pep"/>
    <property type="match status" value="1"/>
</dbReference>
<dbReference type="Pfam" id="PF08254">
    <property type="entry name" value="Leader_Thr"/>
    <property type="match status" value="1"/>
</dbReference>
<proteinExistence type="inferred from homology"/>
<keyword id="KW-0028">Amino-acid biosynthesis</keyword>
<keyword id="KW-0428">Leader peptide</keyword>
<keyword id="KW-0791">Threonine biosynthesis</keyword>
<organism>
    <name type="scientific">Yersinia pestis (strain Pestoides F)</name>
    <dbReference type="NCBI Taxonomy" id="386656"/>
    <lineage>
        <taxon>Bacteria</taxon>
        <taxon>Pseudomonadati</taxon>
        <taxon>Pseudomonadota</taxon>
        <taxon>Gammaproteobacteria</taxon>
        <taxon>Enterobacterales</taxon>
        <taxon>Yersiniaceae</taxon>
        <taxon>Yersinia</taxon>
    </lineage>
</organism>
<gene>
    <name evidence="1" type="primary">thrL</name>
    <name type="ordered locus">YPDSF_3174.1</name>
</gene>
<sequence>MRYISLNTTIITTTETTGYGAG</sequence>
<feature type="peptide" id="PRO_0000312900" description="thr operon leader peptide">
    <location>
        <begin position="1"/>
        <end position="22"/>
    </location>
</feature>
<accession>P0C5Z7</accession>
<comment type="function">
    <text evidence="1">This protein is involved in control of the biosynthesis of threonine.</text>
</comment>
<comment type="similarity">
    <text evidence="1">Belongs to the thr operon leader peptide family.</text>
</comment>
<evidence type="ECO:0000255" key="1">
    <source>
        <dbReference type="HAMAP-Rule" id="MF_01907"/>
    </source>
</evidence>